<feature type="chain" id="PRO_0000055660" description="Tyrosine--tRNA ligase">
    <location>
        <begin position="1"/>
        <end position="424"/>
    </location>
</feature>
<feature type="domain" description="S4 RNA-binding" evidence="1">
    <location>
        <begin position="356"/>
        <end position="413"/>
    </location>
</feature>
<feature type="short sequence motif" description="'HIGH' region">
    <location>
        <begin position="41"/>
        <end position="50"/>
    </location>
</feature>
<feature type="short sequence motif" description="'KMSKS' region">
    <location>
        <begin position="231"/>
        <end position="235"/>
    </location>
</feature>
<feature type="binding site" evidence="1">
    <location>
        <position position="36"/>
    </location>
    <ligand>
        <name>L-tyrosine</name>
        <dbReference type="ChEBI" id="CHEBI:58315"/>
    </ligand>
</feature>
<feature type="binding site" evidence="1">
    <location>
        <position position="171"/>
    </location>
    <ligand>
        <name>L-tyrosine</name>
        <dbReference type="ChEBI" id="CHEBI:58315"/>
    </ligand>
</feature>
<feature type="binding site" evidence="1">
    <location>
        <position position="175"/>
    </location>
    <ligand>
        <name>L-tyrosine</name>
        <dbReference type="ChEBI" id="CHEBI:58315"/>
    </ligand>
</feature>
<feature type="binding site" evidence="1">
    <location>
        <position position="234"/>
    </location>
    <ligand>
        <name>ATP</name>
        <dbReference type="ChEBI" id="CHEBI:30616"/>
    </ligand>
</feature>
<feature type="helix" evidence="2">
    <location>
        <begin position="6"/>
        <end position="12"/>
    </location>
</feature>
<feature type="strand" evidence="2">
    <location>
        <begin position="16"/>
        <end position="19"/>
    </location>
</feature>
<feature type="helix" evidence="2">
    <location>
        <begin position="21"/>
        <end position="30"/>
    </location>
</feature>
<feature type="strand" evidence="2">
    <location>
        <begin position="34"/>
        <end position="39"/>
    </location>
</feature>
<feature type="strand" evidence="2">
    <location>
        <begin position="42"/>
        <end position="45"/>
    </location>
</feature>
<feature type="helix" evidence="2">
    <location>
        <begin position="48"/>
        <end position="50"/>
    </location>
</feature>
<feature type="helix" evidence="2">
    <location>
        <begin position="51"/>
        <end position="62"/>
    </location>
</feature>
<feature type="strand" evidence="2">
    <location>
        <begin position="66"/>
        <end position="71"/>
    </location>
</feature>
<feature type="helix" evidence="2">
    <location>
        <begin position="73"/>
        <end position="79"/>
    </location>
</feature>
<feature type="turn" evidence="2">
    <location>
        <begin position="84"/>
        <end position="86"/>
    </location>
</feature>
<feature type="helix" evidence="2">
    <location>
        <begin position="88"/>
        <end position="90"/>
    </location>
</feature>
<feature type="helix" evidence="2">
    <location>
        <begin position="91"/>
        <end position="109"/>
    </location>
</feature>
<feature type="strand" evidence="2">
    <location>
        <begin position="113"/>
        <end position="115"/>
    </location>
</feature>
<feature type="strand" evidence="2">
    <location>
        <begin position="120"/>
        <end position="123"/>
    </location>
</feature>
<feature type="helix" evidence="2">
    <location>
        <begin position="125"/>
        <end position="128"/>
    </location>
</feature>
<feature type="helix" evidence="2">
    <location>
        <begin position="133"/>
        <end position="139"/>
    </location>
</feature>
<feature type="helix" evidence="2">
    <location>
        <begin position="141"/>
        <end position="143"/>
    </location>
</feature>
<feature type="helix" evidence="2">
    <location>
        <begin position="146"/>
        <end position="151"/>
    </location>
</feature>
<feature type="helix" evidence="2">
    <location>
        <begin position="153"/>
        <end position="158"/>
    </location>
</feature>
<feature type="helix" evidence="2">
    <location>
        <begin position="166"/>
        <end position="186"/>
    </location>
</feature>
<feature type="strand" evidence="2">
    <location>
        <begin position="190"/>
        <end position="193"/>
    </location>
</feature>
<feature type="helix" evidence="2">
    <location>
        <begin position="198"/>
        <end position="212"/>
    </location>
</feature>
<feature type="strand" evidence="2">
    <location>
        <begin position="217"/>
        <end position="220"/>
    </location>
</feature>
<feature type="strand" evidence="2">
    <location>
        <begin position="236"/>
        <end position="238"/>
    </location>
</feature>
<feature type="strand" evidence="2">
    <location>
        <begin position="242"/>
        <end position="244"/>
    </location>
</feature>
<feature type="turn" evidence="2">
    <location>
        <begin position="245"/>
        <end position="247"/>
    </location>
</feature>
<feature type="helix" evidence="2">
    <location>
        <begin position="250"/>
        <end position="258"/>
    </location>
</feature>
<feature type="helix" evidence="2">
    <location>
        <begin position="262"/>
        <end position="272"/>
    </location>
</feature>
<feature type="helix" evidence="2">
    <location>
        <begin position="277"/>
        <end position="289"/>
    </location>
</feature>
<feature type="helix" evidence="2">
    <location>
        <begin position="291"/>
        <end position="293"/>
    </location>
</feature>
<feature type="helix" evidence="2">
    <location>
        <begin position="295"/>
        <end position="323"/>
    </location>
</feature>
<feature type="turn" evidence="2">
    <location>
        <begin position="324"/>
        <end position="326"/>
    </location>
</feature>
<feature type="helix" evidence="2">
    <location>
        <begin position="335"/>
        <end position="344"/>
    </location>
</feature>
<feature type="strand" evidence="2">
    <location>
        <begin position="347"/>
        <end position="350"/>
    </location>
</feature>
<feature type="strand" evidence="2">
    <location>
        <begin position="352"/>
        <end position="354"/>
    </location>
</feature>
<feature type="helix" evidence="2">
    <location>
        <begin position="358"/>
        <end position="364"/>
    </location>
</feature>
<feature type="helix" evidence="2">
    <location>
        <begin position="371"/>
        <end position="378"/>
    </location>
</feature>
<feature type="turn" evidence="2">
    <location>
        <begin position="379"/>
        <end position="381"/>
    </location>
</feature>
<feature type="strand" evidence="2">
    <location>
        <begin position="383"/>
        <end position="387"/>
    </location>
</feature>
<feature type="helix" evidence="2">
    <location>
        <begin position="399"/>
        <end position="401"/>
    </location>
</feature>
<feature type="turn" evidence="2">
    <location>
        <begin position="404"/>
        <end position="406"/>
    </location>
</feature>
<feature type="strand" evidence="2">
    <location>
        <begin position="407"/>
        <end position="415"/>
    </location>
</feature>
<feature type="strand" evidence="2">
    <location>
        <begin position="417"/>
        <end position="422"/>
    </location>
</feature>
<protein>
    <recommendedName>
        <fullName evidence="1">Tyrosine--tRNA ligase</fullName>
        <ecNumber evidence="1">6.1.1.1</ecNumber>
    </recommendedName>
    <alternativeName>
        <fullName evidence="1">Tyrosyl-tRNA synthetase</fullName>
        <shortName evidence="1">TyrRS</shortName>
    </alternativeName>
</protein>
<keyword id="KW-0002">3D-structure</keyword>
<keyword id="KW-0030">Aminoacyl-tRNA synthetase</keyword>
<keyword id="KW-0067">ATP-binding</keyword>
<keyword id="KW-0963">Cytoplasm</keyword>
<keyword id="KW-0436">Ligase</keyword>
<keyword id="KW-0547">Nucleotide-binding</keyword>
<keyword id="KW-0648">Protein biosynthesis</keyword>
<keyword id="KW-1185">Reference proteome</keyword>
<keyword id="KW-0694">RNA-binding</keyword>
<sequence length="424" mass="46330">MSGMILDELSWRGLIAQSTDLDTLAAEAQRGPMTVYAGFDPTAPSLHAGHLVPLLTLRRFQRAGHRPIVLAGGATGMIGDPRDVGERSLNEADTVAEWTERIRGQLERFVDFDDSPMGAIVENNLEWTGSLSAIEFLRDIGKHFSVNVMLARDTIRRRLAGEGISYTEFSYLLLQANDYVELHRRHGCTLQIGGADQWGNIIAGVRLVRQKLGATVHALTVPLVTAADGTKFGKSTGGGSLWLDPQMTSPYAWYQYFVNTADADVIRYLRWFTFLSADELAELEQATAQRPQQRAAQRRLASELTVLVHGEAATAAVEHASRALFGRGELARLDEATLAAALRETTVAELKPGSPDGIVDLLVASGLSASKGAARRTIHEGGVSVNNIRVDNEEWVPQSSDFLHGRWLVLRRGKRSIAGVERIG</sequence>
<reference key="1">
    <citation type="journal article" date="1998" name="Nature">
        <title>Deciphering the biology of Mycobacterium tuberculosis from the complete genome sequence.</title>
        <authorList>
            <person name="Cole S.T."/>
            <person name="Brosch R."/>
            <person name="Parkhill J."/>
            <person name="Garnier T."/>
            <person name="Churcher C.M."/>
            <person name="Harris D.E."/>
            <person name="Gordon S.V."/>
            <person name="Eiglmeier K."/>
            <person name="Gas S."/>
            <person name="Barry C.E. III"/>
            <person name="Tekaia F."/>
            <person name="Badcock K."/>
            <person name="Basham D."/>
            <person name="Brown D."/>
            <person name="Chillingworth T."/>
            <person name="Connor R."/>
            <person name="Davies R.M."/>
            <person name="Devlin K."/>
            <person name="Feltwell T."/>
            <person name="Gentles S."/>
            <person name="Hamlin N."/>
            <person name="Holroyd S."/>
            <person name="Hornsby T."/>
            <person name="Jagels K."/>
            <person name="Krogh A."/>
            <person name="McLean J."/>
            <person name="Moule S."/>
            <person name="Murphy L.D."/>
            <person name="Oliver S."/>
            <person name="Osborne J."/>
            <person name="Quail M.A."/>
            <person name="Rajandream M.A."/>
            <person name="Rogers J."/>
            <person name="Rutter S."/>
            <person name="Seeger K."/>
            <person name="Skelton S."/>
            <person name="Squares S."/>
            <person name="Squares R."/>
            <person name="Sulston J.E."/>
            <person name="Taylor K."/>
            <person name="Whitehead S."/>
            <person name="Barrell B.G."/>
        </authorList>
    </citation>
    <scope>NUCLEOTIDE SEQUENCE [LARGE SCALE GENOMIC DNA]</scope>
    <source>
        <strain>ATCC 25618 / H37Rv</strain>
    </source>
</reference>
<reference key="2">
    <citation type="journal article" date="2008" name="BMC Syst. Biol.">
        <title>targetTB: a target identification pipeline for Mycobacterium tuberculosis through an interactome, reactome and genome-scale structural analysis.</title>
        <authorList>
            <person name="Raman K."/>
            <person name="Yeturu K."/>
            <person name="Chandra N."/>
        </authorList>
    </citation>
    <scope>IDENTIFICATION AS A DRUG TARGET [LARGE SCALE ANALYSIS]</scope>
</reference>
<reference key="3">
    <citation type="journal article" date="2011" name="Mol. Cell. Proteomics">
        <title>Proteogenomic analysis of Mycobacterium tuberculosis by high resolution mass spectrometry.</title>
        <authorList>
            <person name="Kelkar D.S."/>
            <person name="Kumar D."/>
            <person name="Kumar P."/>
            <person name="Balakrishnan L."/>
            <person name="Muthusamy B."/>
            <person name="Yadav A.K."/>
            <person name="Shrivastava P."/>
            <person name="Marimuthu A."/>
            <person name="Anand S."/>
            <person name="Sundaram H."/>
            <person name="Kingsbury R."/>
            <person name="Harsha H.C."/>
            <person name="Nair B."/>
            <person name="Prasad T.S."/>
            <person name="Chauhan D.S."/>
            <person name="Katoch K."/>
            <person name="Katoch V.M."/>
            <person name="Kumar P."/>
            <person name="Chaerkady R."/>
            <person name="Ramachandran S."/>
            <person name="Dash D."/>
            <person name="Pandey A."/>
        </authorList>
    </citation>
    <scope>IDENTIFICATION BY MASS SPECTROMETRY [LARGE SCALE ANALYSIS]</scope>
    <source>
        <strain>ATCC 25618 / H37Rv</strain>
    </source>
</reference>
<organism>
    <name type="scientific">Mycobacterium tuberculosis (strain ATCC 25618 / H37Rv)</name>
    <dbReference type="NCBI Taxonomy" id="83332"/>
    <lineage>
        <taxon>Bacteria</taxon>
        <taxon>Bacillati</taxon>
        <taxon>Actinomycetota</taxon>
        <taxon>Actinomycetes</taxon>
        <taxon>Mycobacteriales</taxon>
        <taxon>Mycobacteriaceae</taxon>
        <taxon>Mycobacterium</taxon>
        <taxon>Mycobacterium tuberculosis complex</taxon>
    </lineage>
</organism>
<comment type="function">
    <text evidence="1">Catalyzes the attachment of tyrosine to tRNA(Tyr) in a two-step reaction: tyrosine is first activated by ATP to form Tyr-AMP and then transferred to the acceptor end of tRNA(Tyr).</text>
</comment>
<comment type="catalytic activity">
    <reaction evidence="1">
        <text>tRNA(Tyr) + L-tyrosine + ATP = L-tyrosyl-tRNA(Tyr) + AMP + diphosphate + H(+)</text>
        <dbReference type="Rhea" id="RHEA:10220"/>
        <dbReference type="Rhea" id="RHEA-COMP:9706"/>
        <dbReference type="Rhea" id="RHEA-COMP:9707"/>
        <dbReference type="ChEBI" id="CHEBI:15378"/>
        <dbReference type="ChEBI" id="CHEBI:30616"/>
        <dbReference type="ChEBI" id="CHEBI:33019"/>
        <dbReference type="ChEBI" id="CHEBI:58315"/>
        <dbReference type="ChEBI" id="CHEBI:78442"/>
        <dbReference type="ChEBI" id="CHEBI:78536"/>
        <dbReference type="ChEBI" id="CHEBI:456215"/>
        <dbReference type="EC" id="6.1.1.1"/>
    </reaction>
</comment>
<comment type="subunit">
    <text evidence="1">Homodimer.</text>
</comment>
<comment type="subcellular location">
    <subcellularLocation>
        <location evidence="1">Cytoplasm</location>
    </subcellularLocation>
</comment>
<comment type="miscellaneous">
    <text>Was identified as a high-confidence drug target.</text>
</comment>
<comment type="similarity">
    <text evidence="1">Belongs to the class-I aminoacyl-tRNA synthetase family. TyrS type 1 subfamily.</text>
</comment>
<name>SYY_MYCTU</name>
<dbReference type="EC" id="6.1.1.1" evidence="1"/>
<dbReference type="EMBL" id="AL123456">
    <property type="protein sequence ID" value="CCP44454.1"/>
    <property type="molecule type" value="Genomic_DNA"/>
</dbReference>
<dbReference type="PIR" id="H70501">
    <property type="entry name" value="H70501"/>
</dbReference>
<dbReference type="RefSeq" id="NP_216205.1">
    <property type="nucleotide sequence ID" value="NC_000962.3"/>
</dbReference>
<dbReference type="RefSeq" id="WP_003408375.1">
    <property type="nucleotide sequence ID" value="NZ_NVQJ01000010.1"/>
</dbReference>
<dbReference type="PDB" id="2JAN">
    <property type="method" value="X-ray"/>
    <property type="resolution" value="2.90 A"/>
    <property type="chains" value="A/B/C/D=1-424"/>
</dbReference>
<dbReference type="PDBsum" id="2JAN"/>
<dbReference type="SMR" id="P9WFT1"/>
<dbReference type="FunCoup" id="P9WFT1">
    <property type="interactions" value="514"/>
</dbReference>
<dbReference type="STRING" id="83332.Rv1689"/>
<dbReference type="PaxDb" id="83332-Rv1689"/>
<dbReference type="DNASU" id="885668"/>
<dbReference type="GeneID" id="45425658"/>
<dbReference type="GeneID" id="885668"/>
<dbReference type="KEGG" id="mtu:Rv1689"/>
<dbReference type="KEGG" id="mtv:RVBD_1689"/>
<dbReference type="PATRIC" id="fig|83332.111.peg.1876"/>
<dbReference type="TubercuList" id="Rv1689"/>
<dbReference type="eggNOG" id="COG0162">
    <property type="taxonomic scope" value="Bacteria"/>
</dbReference>
<dbReference type="InParanoid" id="P9WFT1"/>
<dbReference type="OrthoDB" id="9804243at2"/>
<dbReference type="PhylomeDB" id="P9WFT1"/>
<dbReference type="BRENDA" id="6.1.1.1">
    <property type="organism ID" value="3445"/>
</dbReference>
<dbReference type="EvolutionaryTrace" id="P9WFT1"/>
<dbReference type="Proteomes" id="UP000001584">
    <property type="component" value="Chromosome"/>
</dbReference>
<dbReference type="GO" id="GO:0005829">
    <property type="term" value="C:cytosol"/>
    <property type="evidence" value="ECO:0000318"/>
    <property type="project" value="GO_Central"/>
</dbReference>
<dbReference type="GO" id="GO:0009274">
    <property type="term" value="C:peptidoglycan-based cell wall"/>
    <property type="evidence" value="ECO:0007005"/>
    <property type="project" value="MTBBASE"/>
</dbReference>
<dbReference type="GO" id="GO:0005886">
    <property type="term" value="C:plasma membrane"/>
    <property type="evidence" value="ECO:0007005"/>
    <property type="project" value="MTBBASE"/>
</dbReference>
<dbReference type="GO" id="GO:0005524">
    <property type="term" value="F:ATP binding"/>
    <property type="evidence" value="ECO:0007669"/>
    <property type="project" value="UniProtKB-UniRule"/>
</dbReference>
<dbReference type="GO" id="GO:0003723">
    <property type="term" value="F:RNA binding"/>
    <property type="evidence" value="ECO:0007669"/>
    <property type="project" value="UniProtKB-KW"/>
</dbReference>
<dbReference type="GO" id="GO:0004831">
    <property type="term" value="F:tyrosine-tRNA ligase activity"/>
    <property type="evidence" value="ECO:0000318"/>
    <property type="project" value="GO_Central"/>
</dbReference>
<dbReference type="GO" id="GO:0043039">
    <property type="term" value="P:tRNA aminoacylation"/>
    <property type="evidence" value="ECO:0000318"/>
    <property type="project" value="GO_Central"/>
</dbReference>
<dbReference type="GO" id="GO:0006437">
    <property type="term" value="P:tyrosyl-tRNA aminoacylation"/>
    <property type="evidence" value="ECO:0007669"/>
    <property type="project" value="UniProtKB-UniRule"/>
</dbReference>
<dbReference type="CDD" id="cd00165">
    <property type="entry name" value="S4"/>
    <property type="match status" value="1"/>
</dbReference>
<dbReference type="CDD" id="cd00805">
    <property type="entry name" value="TyrRS_core"/>
    <property type="match status" value="1"/>
</dbReference>
<dbReference type="FunFam" id="1.10.240.10:FF:000001">
    <property type="entry name" value="Tyrosine--tRNA ligase"/>
    <property type="match status" value="1"/>
</dbReference>
<dbReference type="FunFam" id="3.10.290.10:FF:000014">
    <property type="entry name" value="Tyrosine--tRNA ligase"/>
    <property type="match status" value="1"/>
</dbReference>
<dbReference type="FunFam" id="3.40.50.620:FF:000008">
    <property type="entry name" value="Tyrosine--tRNA ligase"/>
    <property type="match status" value="1"/>
</dbReference>
<dbReference type="Gene3D" id="3.40.50.620">
    <property type="entry name" value="HUPs"/>
    <property type="match status" value="1"/>
</dbReference>
<dbReference type="Gene3D" id="3.10.290.10">
    <property type="entry name" value="RNA-binding S4 domain"/>
    <property type="match status" value="1"/>
</dbReference>
<dbReference type="Gene3D" id="1.10.240.10">
    <property type="entry name" value="Tyrosyl-Transfer RNA Synthetase"/>
    <property type="match status" value="1"/>
</dbReference>
<dbReference type="HAMAP" id="MF_02006">
    <property type="entry name" value="Tyr_tRNA_synth_type1"/>
    <property type="match status" value="1"/>
</dbReference>
<dbReference type="InterPro" id="IPR001412">
    <property type="entry name" value="aa-tRNA-synth_I_CS"/>
</dbReference>
<dbReference type="InterPro" id="IPR002305">
    <property type="entry name" value="aa-tRNA-synth_Ic"/>
</dbReference>
<dbReference type="InterPro" id="IPR014729">
    <property type="entry name" value="Rossmann-like_a/b/a_fold"/>
</dbReference>
<dbReference type="InterPro" id="IPR002942">
    <property type="entry name" value="S4_RNA-bd"/>
</dbReference>
<dbReference type="InterPro" id="IPR036986">
    <property type="entry name" value="S4_RNA-bd_sf"/>
</dbReference>
<dbReference type="InterPro" id="IPR054608">
    <property type="entry name" value="SYY-like_C"/>
</dbReference>
<dbReference type="InterPro" id="IPR002307">
    <property type="entry name" value="Tyr-tRNA-ligase"/>
</dbReference>
<dbReference type="InterPro" id="IPR024088">
    <property type="entry name" value="Tyr-tRNA-ligase_bac-type"/>
</dbReference>
<dbReference type="InterPro" id="IPR024107">
    <property type="entry name" value="Tyr-tRNA-ligase_bac_1"/>
</dbReference>
<dbReference type="NCBIfam" id="TIGR00234">
    <property type="entry name" value="tyrS"/>
    <property type="match status" value="1"/>
</dbReference>
<dbReference type="PANTHER" id="PTHR11766:SF0">
    <property type="entry name" value="TYROSINE--TRNA LIGASE, MITOCHONDRIAL"/>
    <property type="match status" value="1"/>
</dbReference>
<dbReference type="PANTHER" id="PTHR11766">
    <property type="entry name" value="TYROSYL-TRNA SYNTHETASE"/>
    <property type="match status" value="1"/>
</dbReference>
<dbReference type="Pfam" id="PF22421">
    <property type="entry name" value="SYY_C-terminal"/>
    <property type="match status" value="1"/>
</dbReference>
<dbReference type="Pfam" id="PF00579">
    <property type="entry name" value="tRNA-synt_1b"/>
    <property type="match status" value="1"/>
</dbReference>
<dbReference type="PRINTS" id="PR01040">
    <property type="entry name" value="TRNASYNTHTYR"/>
</dbReference>
<dbReference type="SMART" id="SM00363">
    <property type="entry name" value="S4"/>
    <property type="match status" value="1"/>
</dbReference>
<dbReference type="SUPFAM" id="SSF55174">
    <property type="entry name" value="Alpha-L RNA-binding motif"/>
    <property type="match status" value="1"/>
</dbReference>
<dbReference type="SUPFAM" id="SSF52374">
    <property type="entry name" value="Nucleotidylyl transferase"/>
    <property type="match status" value="1"/>
</dbReference>
<dbReference type="PROSITE" id="PS00178">
    <property type="entry name" value="AA_TRNA_LIGASE_I"/>
    <property type="match status" value="1"/>
</dbReference>
<dbReference type="PROSITE" id="PS50889">
    <property type="entry name" value="S4"/>
    <property type="match status" value="1"/>
</dbReference>
<gene>
    <name evidence="1" type="primary">tyrS</name>
    <name type="ordered locus">Rv1689</name>
    <name type="ORF">MTCI125.11</name>
</gene>
<proteinExistence type="evidence at protein level"/>
<evidence type="ECO:0000255" key="1">
    <source>
        <dbReference type="HAMAP-Rule" id="MF_02006"/>
    </source>
</evidence>
<evidence type="ECO:0007829" key="2">
    <source>
        <dbReference type="PDB" id="2JAN"/>
    </source>
</evidence>
<accession>P9WFT1</accession>
<accession>L0TA47</accession>
<accession>O33191</accession>
<accession>P67611</accession>